<name>DUS1L_RAT</name>
<proteinExistence type="evidence at transcript level"/>
<comment type="function">
    <text evidence="3">Catalyzes the synthesis of dihydrouridine, a modified base found in the D-loop of most tRNAs. Specifically modifies U16 and U17 in cytoplasmic tRNAs. Affects the level of some mature tRNA and thereby the total cellular translation.</text>
</comment>
<comment type="catalytic activity">
    <reaction evidence="3">
        <text>5,6-dihydrouridine(16) in tRNA + NADP(+) = uridine(16) in tRNA + NADPH + H(+)</text>
        <dbReference type="Rhea" id="RHEA:53376"/>
        <dbReference type="Rhea" id="RHEA-COMP:13543"/>
        <dbReference type="Rhea" id="RHEA-COMP:13544"/>
        <dbReference type="ChEBI" id="CHEBI:15378"/>
        <dbReference type="ChEBI" id="CHEBI:57783"/>
        <dbReference type="ChEBI" id="CHEBI:58349"/>
        <dbReference type="ChEBI" id="CHEBI:65315"/>
        <dbReference type="ChEBI" id="CHEBI:74443"/>
        <dbReference type="EC" id="1.3.1.88"/>
    </reaction>
    <physiologicalReaction direction="right-to-left" evidence="3">
        <dbReference type="Rhea" id="RHEA:53378"/>
    </physiologicalReaction>
</comment>
<comment type="catalytic activity">
    <reaction evidence="3">
        <text>5,6-dihydrouridine(16) in tRNA + NAD(+) = uridine(16) in tRNA + NADH + H(+)</text>
        <dbReference type="Rhea" id="RHEA:53380"/>
        <dbReference type="Rhea" id="RHEA-COMP:13543"/>
        <dbReference type="Rhea" id="RHEA-COMP:13544"/>
        <dbReference type="ChEBI" id="CHEBI:15378"/>
        <dbReference type="ChEBI" id="CHEBI:57540"/>
        <dbReference type="ChEBI" id="CHEBI:57945"/>
        <dbReference type="ChEBI" id="CHEBI:65315"/>
        <dbReference type="ChEBI" id="CHEBI:74443"/>
        <dbReference type="EC" id="1.3.1.88"/>
    </reaction>
    <physiologicalReaction direction="right-to-left" evidence="3">
        <dbReference type="Rhea" id="RHEA:53382"/>
    </physiologicalReaction>
</comment>
<comment type="catalytic activity">
    <reaction evidence="1">
        <text>5,6-dihydrouridine(17) in tRNA + NAD(+) = uridine(17) in tRNA + NADH + H(+)</text>
        <dbReference type="Rhea" id="RHEA:53372"/>
        <dbReference type="Rhea" id="RHEA-COMP:13541"/>
        <dbReference type="Rhea" id="RHEA-COMP:13542"/>
        <dbReference type="ChEBI" id="CHEBI:15378"/>
        <dbReference type="ChEBI" id="CHEBI:57540"/>
        <dbReference type="ChEBI" id="CHEBI:57945"/>
        <dbReference type="ChEBI" id="CHEBI:65315"/>
        <dbReference type="ChEBI" id="CHEBI:74443"/>
        <dbReference type="EC" id="1.3.1.88"/>
    </reaction>
    <physiologicalReaction direction="right-to-left" evidence="1">
        <dbReference type="Rhea" id="RHEA:53374"/>
    </physiologicalReaction>
</comment>
<comment type="catalytic activity">
    <reaction evidence="1">
        <text>5,6-dihydrouridine(17) in tRNA + NADP(+) = uridine(17) in tRNA + NADPH + H(+)</text>
        <dbReference type="Rhea" id="RHEA:53368"/>
        <dbReference type="Rhea" id="RHEA-COMP:13541"/>
        <dbReference type="Rhea" id="RHEA-COMP:13542"/>
        <dbReference type="ChEBI" id="CHEBI:15378"/>
        <dbReference type="ChEBI" id="CHEBI:57783"/>
        <dbReference type="ChEBI" id="CHEBI:58349"/>
        <dbReference type="ChEBI" id="CHEBI:65315"/>
        <dbReference type="ChEBI" id="CHEBI:74443"/>
        <dbReference type="EC" id="1.3.1.88"/>
    </reaction>
    <physiologicalReaction direction="right-to-left" evidence="1">
        <dbReference type="Rhea" id="RHEA:53370"/>
    </physiologicalReaction>
</comment>
<comment type="cofactor">
    <cofactor evidence="2">
        <name>FMN</name>
        <dbReference type="ChEBI" id="CHEBI:58210"/>
    </cofactor>
</comment>
<comment type="subcellular location">
    <subcellularLocation>
        <location evidence="3">Cytoplasm</location>
    </subcellularLocation>
    <subcellularLocation>
        <location evidence="3">Nucleus</location>
    </subcellularLocation>
    <text evidence="3">Predominantly cytoplasmic localization with a minor population localized to the nucleus.</text>
</comment>
<comment type="similarity">
    <text evidence="5">Belongs to the Dus family. Dus1 subfamily.</text>
</comment>
<reference key="1">
    <citation type="submission" date="2003-06" db="EMBL/GenBank/DDBJ databases">
        <title>Liver regeneration after PH.</title>
        <authorList>
            <person name="Xu C.S."/>
            <person name="Li W.Q."/>
            <person name="Li Y.C."/>
            <person name="Han H.P."/>
            <person name="Wang G.P."/>
            <person name="Chai L.Q."/>
            <person name="Yuan J.Y."/>
            <person name="Yang K.J."/>
            <person name="Yan H.M."/>
            <person name="Chang C.F."/>
            <person name="Zhao L.F."/>
            <person name="Ma H."/>
            <person name="Wang L."/>
            <person name="Wang S.F."/>
            <person name="Shi J.B."/>
            <person name="Rahman S."/>
            <person name="Wang Q.N."/>
            <person name="Zhang J.B."/>
        </authorList>
    </citation>
    <scope>NUCLEOTIDE SEQUENCE [LARGE SCALE MRNA]</scope>
    <source>
        <tissue>Liver</tissue>
    </source>
</reference>
<feature type="chain" id="PRO_0000247228" description="tRNA-dihydrouridine(16/17) synthase [NAD(P)(+)]-like">
    <location>
        <begin position="1"/>
        <end position="438"/>
    </location>
</feature>
<feature type="region of interest" description="Disordered" evidence="4">
    <location>
        <begin position="343"/>
        <end position="387"/>
    </location>
</feature>
<feature type="compositionally biased region" description="Basic residues" evidence="4">
    <location>
        <begin position="373"/>
        <end position="383"/>
    </location>
</feature>
<feature type="active site" description="Proton donor" evidence="2">
    <location>
        <position position="108"/>
    </location>
</feature>
<feature type="binding site" evidence="2">
    <location>
        <begin position="23"/>
        <end position="25"/>
    </location>
    <ligand>
        <name>FMN</name>
        <dbReference type="ChEBI" id="CHEBI:58210"/>
    </ligand>
</feature>
<feature type="binding site" evidence="2">
    <location>
        <position position="79"/>
    </location>
    <ligand>
        <name>FMN</name>
        <dbReference type="ChEBI" id="CHEBI:58210"/>
    </ligand>
</feature>
<feature type="binding site" evidence="2">
    <location>
        <position position="147"/>
    </location>
    <ligand>
        <name>FMN</name>
        <dbReference type="ChEBI" id="CHEBI:58210"/>
    </ligand>
</feature>
<feature type="binding site" evidence="2">
    <location>
        <position position="175"/>
    </location>
    <ligand>
        <name>FMN</name>
        <dbReference type="ChEBI" id="CHEBI:58210"/>
    </ligand>
</feature>
<feature type="binding site" evidence="2">
    <location>
        <begin position="208"/>
        <end position="210"/>
    </location>
    <ligand>
        <name>FMN</name>
        <dbReference type="ChEBI" id="CHEBI:58210"/>
    </ligand>
</feature>
<feature type="binding site" evidence="2">
    <location>
        <begin position="232"/>
        <end position="233"/>
    </location>
    <ligand>
        <name>FMN</name>
        <dbReference type="ChEBI" id="CHEBI:58210"/>
    </ligand>
</feature>
<evidence type="ECO:0000250" key="1">
    <source>
        <dbReference type="UniProtKB" id="P53759"/>
    </source>
</evidence>
<evidence type="ECO:0000250" key="2">
    <source>
        <dbReference type="UniProtKB" id="Q5SMC7"/>
    </source>
</evidence>
<evidence type="ECO:0000250" key="3">
    <source>
        <dbReference type="UniProtKB" id="Q6P1R4"/>
    </source>
</evidence>
<evidence type="ECO:0000256" key="4">
    <source>
        <dbReference type="SAM" id="MobiDB-lite"/>
    </source>
</evidence>
<evidence type="ECO:0000305" key="5"/>
<organism>
    <name type="scientific">Rattus norvegicus</name>
    <name type="common">Rat</name>
    <dbReference type="NCBI Taxonomy" id="10116"/>
    <lineage>
        <taxon>Eukaryota</taxon>
        <taxon>Metazoa</taxon>
        <taxon>Chordata</taxon>
        <taxon>Craniata</taxon>
        <taxon>Vertebrata</taxon>
        <taxon>Euteleostomi</taxon>
        <taxon>Mammalia</taxon>
        <taxon>Eutheria</taxon>
        <taxon>Euarchontoglires</taxon>
        <taxon>Glires</taxon>
        <taxon>Rodentia</taxon>
        <taxon>Myomorpha</taxon>
        <taxon>Muroidea</taxon>
        <taxon>Muridae</taxon>
        <taxon>Murinae</taxon>
        <taxon>Rattus</taxon>
    </lineage>
</organism>
<sequence length="438" mass="49709">MPKLQGFEFWSRALGGARHVVAPMVDQSELAWRLLSRRHGAQLCYTPMLHAQVFVRDANYRKENLYCDVCPEDRPLIVQFCANDPEVFVQAALLAQDYCDAIDLNLGCPQMIAKRGRYGAFLQEEWDLLQRMILLAHERLSVPVTCKIRVFPEIDKTVRYAQMLEKAGCQLLTVHGRTKEQKGPMAGTASWEHIKAVRKAVGIPVFANGNIRCLQDVERCIQDTGVQGVMSAEGNLHNPALFEGRSPAVWELADEYLDIVRQHPCPLSYVRAHLFKLWHHTLQVHQQLREELAKVKTLEGVAAVSQALKLRCQEDMARQQEGVRPADNLPAFHWICQPYIRPGPKEGSKENSSGRSKRALEEEEGSMEGLSKNKLKKQLRNPHKTFDPSLKPKYAKCDQCGNPKGNRCVFNLCRGCCKKRAFRETADCPGHDCFLRPN</sequence>
<gene>
    <name type="primary">Dus1l</name>
    <name type="synonym">Pp3111</name>
</gene>
<keyword id="KW-0963">Cytoplasm</keyword>
<keyword id="KW-0285">Flavoprotein</keyword>
<keyword id="KW-0288">FMN</keyword>
<keyword id="KW-0520">NAD</keyword>
<keyword id="KW-0521">NADP</keyword>
<keyword id="KW-0539">Nucleus</keyword>
<keyword id="KW-0560">Oxidoreductase</keyword>
<keyword id="KW-1185">Reference proteome</keyword>
<keyword id="KW-0819">tRNA processing</keyword>
<dbReference type="EC" id="1.3.1.88" evidence="3"/>
<dbReference type="EMBL" id="AF508021">
    <property type="protein sequence ID" value="AAM34683.1"/>
    <property type="molecule type" value="mRNA"/>
</dbReference>
<dbReference type="EMBL" id="AY327509">
    <property type="protein sequence ID" value="AAP97740.1"/>
    <property type="molecule type" value="mRNA"/>
</dbReference>
<dbReference type="EMBL" id="AY327510">
    <property type="protein sequence ID" value="AAP97741.1"/>
    <property type="molecule type" value="mRNA"/>
</dbReference>
<dbReference type="RefSeq" id="NP_742015.1">
    <property type="nucleotide sequence ID" value="NM_172018.1"/>
</dbReference>
<dbReference type="SMR" id="Q8K582"/>
<dbReference type="FunCoup" id="Q8K582">
    <property type="interactions" value="1877"/>
</dbReference>
<dbReference type="STRING" id="10116.ENSRNOP00000075256"/>
<dbReference type="PhosphoSitePlus" id="Q8K582"/>
<dbReference type="PaxDb" id="10116-ENSRNOP00000067257"/>
<dbReference type="GeneID" id="246185"/>
<dbReference type="KEGG" id="rno:246185"/>
<dbReference type="AGR" id="RGD:708389"/>
<dbReference type="CTD" id="64118"/>
<dbReference type="RGD" id="708389">
    <property type="gene designation" value="Dus1l"/>
</dbReference>
<dbReference type="eggNOG" id="KOG2335">
    <property type="taxonomic scope" value="Eukaryota"/>
</dbReference>
<dbReference type="InParanoid" id="Q8K582"/>
<dbReference type="PhylomeDB" id="Q8K582"/>
<dbReference type="PRO" id="PR:Q8K582"/>
<dbReference type="Proteomes" id="UP000002494">
    <property type="component" value="Unplaced"/>
</dbReference>
<dbReference type="GO" id="GO:0005737">
    <property type="term" value="C:cytoplasm"/>
    <property type="evidence" value="ECO:0000250"/>
    <property type="project" value="UniProtKB"/>
</dbReference>
<dbReference type="GO" id="GO:0005634">
    <property type="term" value="C:nucleus"/>
    <property type="evidence" value="ECO:0000250"/>
    <property type="project" value="UniProtKB"/>
</dbReference>
<dbReference type="GO" id="GO:0050660">
    <property type="term" value="F:flavin adenine dinucleotide binding"/>
    <property type="evidence" value="ECO:0007669"/>
    <property type="project" value="InterPro"/>
</dbReference>
<dbReference type="GO" id="GO:0017150">
    <property type="term" value="F:tRNA dihydrouridine synthase activity"/>
    <property type="evidence" value="ECO:0000318"/>
    <property type="project" value="GO_Central"/>
</dbReference>
<dbReference type="GO" id="GO:0102262">
    <property type="term" value="F:tRNA-dihydrouridine16 synthase activity"/>
    <property type="evidence" value="ECO:0000250"/>
    <property type="project" value="UniProtKB"/>
</dbReference>
<dbReference type="GO" id="GO:0102263">
    <property type="term" value="F:tRNA-dihydrouridine17 synthase activity"/>
    <property type="evidence" value="ECO:0000250"/>
    <property type="project" value="UniProtKB"/>
</dbReference>
<dbReference type="GO" id="GO:0002943">
    <property type="term" value="P:tRNA dihydrouridine synthesis"/>
    <property type="evidence" value="ECO:0000250"/>
    <property type="project" value="UniProtKB"/>
</dbReference>
<dbReference type="CDD" id="cd02801">
    <property type="entry name" value="DUS_like_FMN"/>
    <property type="match status" value="1"/>
</dbReference>
<dbReference type="FunFam" id="3.20.20.70:FF:000081">
    <property type="entry name" value="Dihydrouridine synthase 1 like"/>
    <property type="match status" value="1"/>
</dbReference>
<dbReference type="Gene3D" id="3.20.20.70">
    <property type="entry name" value="Aldolase class I"/>
    <property type="match status" value="1"/>
</dbReference>
<dbReference type="InterPro" id="IPR013785">
    <property type="entry name" value="Aldolase_TIM"/>
</dbReference>
<dbReference type="InterPro" id="IPR035587">
    <property type="entry name" value="DUS-like_FMN-bd"/>
</dbReference>
<dbReference type="InterPro" id="IPR018517">
    <property type="entry name" value="tRNA_hU_synthase_CS"/>
</dbReference>
<dbReference type="PANTHER" id="PTHR11082">
    <property type="entry name" value="TRNA-DIHYDROURIDINE SYNTHASE"/>
    <property type="match status" value="1"/>
</dbReference>
<dbReference type="PANTHER" id="PTHR11082:SF5">
    <property type="entry name" value="TRNA-DIHYDROURIDINE(16_17) SYNTHASE [NAD(P)(+)]-LIKE"/>
    <property type="match status" value="1"/>
</dbReference>
<dbReference type="Pfam" id="PF01207">
    <property type="entry name" value="Dus"/>
    <property type="match status" value="1"/>
</dbReference>
<dbReference type="SUPFAM" id="SSF51395">
    <property type="entry name" value="FMN-linked oxidoreductases"/>
    <property type="match status" value="1"/>
</dbReference>
<dbReference type="PROSITE" id="PS01136">
    <property type="entry name" value="UPF0034"/>
    <property type="match status" value="1"/>
</dbReference>
<accession>Q8K582</accession>
<protein>
    <recommendedName>
        <fullName>tRNA-dihydrouridine(16/17) synthase [NAD(P)(+)]-like</fullName>
        <ecNumber evidence="3">1.3.1.88</ecNumber>
    </recommendedName>
    <alternativeName>
        <fullName>Liver regeneration-related protein LRRG08/LRRG09</fullName>
    </alternativeName>
    <alternativeName>
        <fullName>tRNA-dihydrouridine synthase 1-like</fullName>
    </alternativeName>
</protein>